<reference key="1">
    <citation type="journal article" date="2007" name="Gene">
        <title>Mapping of chimpanzee full-length cDNAs onto the human genome unveils large potential divergence of the transcriptome.</title>
        <authorList>
            <person name="Sakate R."/>
            <person name="Suto Y."/>
            <person name="Imanishi T."/>
            <person name="Tanoue T."/>
            <person name="Hida M."/>
            <person name="Hayasaka I."/>
            <person name="Kusuda J."/>
            <person name="Gojobori T."/>
            <person name="Hashimoto K."/>
            <person name="Hirai M."/>
        </authorList>
    </citation>
    <scope>NUCLEOTIDE SEQUENCE [MRNA]</scope>
    <source>
        <tissue>Brain</tissue>
    </source>
</reference>
<protein>
    <recommendedName>
        <fullName evidence="9">CCN family member 1</fullName>
    </recommendedName>
    <alternativeName>
        <fullName>Cellular communication network factor 1</fullName>
    </alternativeName>
    <alternativeName>
        <fullName>Cysteine-rich angiogenic inducer 61</fullName>
    </alternativeName>
    <alternativeName>
        <fullName>Protein CYR61</fullName>
    </alternativeName>
</protein>
<keyword id="KW-0130">Cell adhesion</keyword>
<keyword id="KW-0145">Chemotaxis</keyword>
<keyword id="KW-1015">Disulfide bond</keyword>
<keyword id="KW-0340">Growth factor binding</keyword>
<keyword id="KW-0358">Heparin-binding</keyword>
<keyword id="KW-0597">Phosphoprotein</keyword>
<keyword id="KW-1185">Reference proteome</keyword>
<keyword id="KW-0964">Secreted</keyword>
<keyword id="KW-0732">Signal</keyword>
<accession>A5A6L1</accession>
<dbReference type="EMBL" id="AB222139">
    <property type="protein sequence ID" value="BAF62384.1"/>
    <property type="molecule type" value="mRNA"/>
</dbReference>
<dbReference type="RefSeq" id="NP_001092023.1">
    <property type="nucleotide sequence ID" value="NM_001098553.1"/>
</dbReference>
<dbReference type="SMR" id="A5A6L1"/>
<dbReference type="FunCoup" id="A5A6L1">
    <property type="interactions" value="204"/>
</dbReference>
<dbReference type="STRING" id="9598.ENSPTRP00000001581"/>
<dbReference type="PaxDb" id="9598-ENSPTRP00000001581"/>
<dbReference type="Ensembl" id="ENSPTRT00000001732.4">
    <property type="protein sequence ID" value="ENSPTRP00000001581.3"/>
    <property type="gene ID" value="ENSPTRG00000000916.7"/>
</dbReference>
<dbReference type="GeneID" id="456988"/>
<dbReference type="KEGG" id="ptr:456988"/>
<dbReference type="CTD" id="3491"/>
<dbReference type="VGNC" id="VGNC:6741">
    <property type="gene designation" value="CCN1"/>
</dbReference>
<dbReference type="eggNOG" id="ENOG502QQQQ">
    <property type="taxonomic scope" value="Eukaryota"/>
</dbReference>
<dbReference type="GeneTree" id="ENSGT00940000155151"/>
<dbReference type="HOGENOM" id="CLU_063247_1_0_1"/>
<dbReference type="InParanoid" id="A5A6L1"/>
<dbReference type="OMA" id="HCDDGET"/>
<dbReference type="OrthoDB" id="2801at9604"/>
<dbReference type="TreeFam" id="TF326070"/>
<dbReference type="Proteomes" id="UP000002277">
    <property type="component" value="Chromosome 1"/>
</dbReference>
<dbReference type="Bgee" id="ENSPTRG00000000916">
    <property type="expression patterns" value="Expressed in fibroblast and 21 other cell types or tissues"/>
</dbReference>
<dbReference type="GO" id="GO:0031012">
    <property type="term" value="C:extracellular matrix"/>
    <property type="evidence" value="ECO:0000318"/>
    <property type="project" value="GO_Central"/>
</dbReference>
<dbReference type="GO" id="GO:0005615">
    <property type="term" value="C:extracellular space"/>
    <property type="evidence" value="ECO:0000318"/>
    <property type="project" value="GO_Central"/>
</dbReference>
<dbReference type="GO" id="GO:0050840">
    <property type="term" value="F:extracellular matrix binding"/>
    <property type="evidence" value="ECO:0007669"/>
    <property type="project" value="Ensembl"/>
</dbReference>
<dbReference type="GO" id="GO:0019838">
    <property type="term" value="F:growth factor binding"/>
    <property type="evidence" value="ECO:0007669"/>
    <property type="project" value="UniProtKB-KW"/>
</dbReference>
<dbReference type="GO" id="GO:0008201">
    <property type="term" value="F:heparin binding"/>
    <property type="evidence" value="ECO:0000318"/>
    <property type="project" value="GO_Central"/>
</dbReference>
<dbReference type="GO" id="GO:0005178">
    <property type="term" value="F:integrin binding"/>
    <property type="evidence" value="ECO:0000318"/>
    <property type="project" value="GO_Central"/>
</dbReference>
<dbReference type="GO" id="GO:0003278">
    <property type="term" value="P:apoptotic process involved in heart morphogenesis"/>
    <property type="evidence" value="ECO:0007669"/>
    <property type="project" value="Ensembl"/>
</dbReference>
<dbReference type="GO" id="GO:0060413">
    <property type="term" value="P:atrial septum morphogenesis"/>
    <property type="evidence" value="ECO:0007669"/>
    <property type="project" value="Ensembl"/>
</dbReference>
<dbReference type="GO" id="GO:0003181">
    <property type="term" value="P:atrioventricular valve morphogenesis"/>
    <property type="evidence" value="ECO:0007669"/>
    <property type="project" value="Ensembl"/>
</dbReference>
<dbReference type="GO" id="GO:0007155">
    <property type="term" value="P:cell adhesion"/>
    <property type="evidence" value="ECO:0000318"/>
    <property type="project" value="GO_Central"/>
</dbReference>
<dbReference type="GO" id="GO:0006935">
    <property type="term" value="P:chemotaxis"/>
    <property type="evidence" value="ECO:0007669"/>
    <property type="project" value="UniProtKB-KW"/>
</dbReference>
<dbReference type="GO" id="GO:0060591">
    <property type="term" value="P:chondroblast differentiation"/>
    <property type="evidence" value="ECO:0007669"/>
    <property type="project" value="Ensembl"/>
</dbReference>
<dbReference type="GO" id="GO:0060710">
    <property type="term" value="P:chorio-allantoic fusion"/>
    <property type="evidence" value="ECO:0007669"/>
    <property type="project" value="Ensembl"/>
</dbReference>
<dbReference type="GO" id="GO:0030198">
    <property type="term" value="P:extracellular matrix organization"/>
    <property type="evidence" value="ECO:0007669"/>
    <property type="project" value="Ensembl"/>
</dbReference>
<dbReference type="GO" id="GO:0007229">
    <property type="term" value="P:integrin-mediated signaling pathway"/>
    <property type="evidence" value="ECO:0007669"/>
    <property type="project" value="Ensembl"/>
</dbReference>
<dbReference type="GO" id="GO:0002041">
    <property type="term" value="P:intussusceptive angiogenesis"/>
    <property type="evidence" value="ECO:0007669"/>
    <property type="project" value="Ensembl"/>
</dbReference>
<dbReference type="GO" id="GO:0060716">
    <property type="term" value="P:labyrinthine layer blood vessel development"/>
    <property type="evidence" value="ECO:0007669"/>
    <property type="project" value="Ensembl"/>
</dbReference>
<dbReference type="GO" id="GO:0043066">
    <property type="term" value="P:negative regulation of apoptotic process"/>
    <property type="evidence" value="ECO:0007669"/>
    <property type="project" value="Ensembl"/>
</dbReference>
<dbReference type="GO" id="GO:0001649">
    <property type="term" value="P:osteoblast differentiation"/>
    <property type="evidence" value="ECO:0007669"/>
    <property type="project" value="Ensembl"/>
</dbReference>
<dbReference type="GO" id="GO:0043065">
    <property type="term" value="P:positive regulation of apoptotic process"/>
    <property type="evidence" value="ECO:0007669"/>
    <property type="project" value="Ensembl"/>
</dbReference>
<dbReference type="GO" id="GO:0030513">
    <property type="term" value="P:positive regulation of BMP signaling pathway"/>
    <property type="evidence" value="ECO:0007669"/>
    <property type="project" value="Ensembl"/>
</dbReference>
<dbReference type="GO" id="GO:0030501">
    <property type="term" value="P:positive regulation of bone mineralization"/>
    <property type="evidence" value="ECO:0007669"/>
    <property type="project" value="Ensembl"/>
</dbReference>
<dbReference type="GO" id="GO:0061036">
    <property type="term" value="P:positive regulation of cartilage development"/>
    <property type="evidence" value="ECO:0007669"/>
    <property type="project" value="Ensembl"/>
</dbReference>
<dbReference type="GO" id="GO:0045597">
    <property type="term" value="P:positive regulation of cell differentiation"/>
    <property type="evidence" value="ECO:0000318"/>
    <property type="project" value="GO_Central"/>
</dbReference>
<dbReference type="GO" id="GO:0030335">
    <property type="term" value="P:positive regulation of cell migration"/>
    <property type="evidence" value="ECO:0000318"/>
    <property type="project" value="GO_Central"/>
</dbReference>
<dbReference type="GO" id="GO:0010811">
    <property type="term" value="P:positive regulation of cell-substrate adhesion"/>
    <property type="evidence" value="ECO:0007669"/>
    <property type="project" value="Ensembl"/>
</dbReference>
<dbReference type="GO" id="GO:2000304">
    <property type="term" value="P:positive regulation of ceramide biosynthetic process"/>
    <property type="evidence" value="ECO:0007669"/>
    <property type="project" value="Ensembl"/>
</dbReference>
<dbReference type="GO" id="GO:0045669">
    <property type="term" value="P:positive regulation of osteoblast differentiation"/>
    <property type="evidence" value="ECO:0007669"/>
    <property type="project" value="Ensembl"/>
</dbReference>
<dbReference type="GO" id="GO:0033690">
    <property type="term" value="P:positive regulation of osteoblast proliferation"/>
    <property type="evidence" value="ECO:0007669"/>
    <property type="project" value="Ensembl"/>
</dbReference>
<dbReference type="GO" id="GO:0045944">
    <property type="term" value="P:positive regulation of transcription by RNA polymerase II"/>
    <property type="evidence" value="ECO:0007669"/>
    <property type="project" value="Ensembl"/>
</dbReference>
<dbReference type="GO" id="GO:0072593">
    <property type="term" value="P:reactive oxygen species metabolic process"/>
    <property type="evidence" value="ECO:0007669"/>
    <property type="project" value="Ensembl"/>
</dbReference>
<dbReference type="GO" id="GO:0070372">
    <property type="term" value="P:regulation of ERK1 and ERK2 cascade"/>
    <property type="evidence" value="ECO:0007669"/>
    <property type="project" value="Ensembl"/>
</dbReference>
<dbReference type="GO" id="GO:0007165">
    <property type="term" value="P:signal transduction"/>
    <property type="evidence" value="ECO:0000318"/>
    <property type="project" value="GO_Central"/>
</dbReference>
<dbReference type="GO" id="GO:0003281">
    <property type="term" value="P:ventricular septum development"/>
    <property type="evidence" value="ECO:0007669"/>
    <property type="project" value="Ensembl"/>
</dbReference>
<dbReference type="FunFam" id="2.10.70.10:FF:000015">
    <property type="entry name" value="CYR61 isoform 1"/>
    <property type="match status" value="1"/>
</dbReference>
<dbReference type="FunFam" id="2.20.100.10:FF:000038">
    <property type="entry name" value="CYR61 isoform 1"/>
    <property type="match status" value="1"/>
</dbReference>
<dbReference type="Gene3D" id="2.10.70.10">
    <property type="entry name" value="Complement Module, domain 1"/>
    <property type="match status" value="1"/>
</dbReference>
<dbReference type="Gene3D" id="2.20.100.10">
    <property type="entry name" value="Thrombospondin type-1 (TSP1) repeat"/>
    <property type="match status" value="1"/>
</dbReference>
<dbReference type="InterPro" id="IPR050941">
    <property type="entry name" value="CCN"/>
</dbReference>
<dbReference type="InterPro" id="IPR006207">
    <property type="entry name" value="Cys_knot_C"/>
</dbReference>
<dbReference type="InterPro" id="IPR006208">
    <property type="entry name" value="Glyco_hormone_CN"/>
</dbReference>
<dbReference type="InterPro" id="IPR009030">
    <property type="entry name" value="Growth_fac_rcpt_cys_sf"/>
</dbReference>
<dbReference type="InterPro" id="IPR000867">
    <property type="entry name" value="IGFBP-like"/>
</dbReference>
<dbReference type="InterPro" id="IPR012395">
    <property type="entry name" value="IGFBP_CNN"/>
</dbReference>
<dbReference type="InterPro" id="IPR017891">
    <property type="entry name" value="Insulin_GF-bd_Cys-rich_CS"/>
</dbReference>
<dbReference type="InterPro" id="IPR043973">
    <property type="entry name" value="TSP1_CCN"/>
</dbReference>
<dbReference type="InterPro" id="IPR000884">
    <property type="entry name" value="TSP1_rpt"/>
</dbReference>
<dbReference type="InterPro" id="IPR036383">
    <property type="entry name" value="TSP1_rpt_sf"/>
</dbReference>
<dbReference type="InterPro" id="IPR001007">
    <property type="entry name" value="VWF_dom"/>
</dbReference>
<dbReference type="PANTHER" id="PTHR11348:SF18">
    <property type="entry name" value="CCN FAMILY MEMBER 1"/>
    <property type="match status" value="1"/>
</dbReference>
<dbReference type="PANTHER" id="PTHR11348">
    <property type="entry name" value="CONNECTIVE TISSUE GROWTH FACTOR-RELATED"/>
    <property type="match status" value="1"/>
</dbReference>
<dbReference type="Pfam" id="PF00007">
    <property type="entry name" value="Cys_knot"/>
    <property type="match status" value="1"/>
</dbReference>
<dbReference type="Pfam" id="PF00219">
    <property type="entry name" value="IGFBP"/>
    <property type="match status" value="1"/>
</dbReference>
<dbReference type="Pfam" id="PF19035">
    <property type="entry name" value="TSP1_CCN"/>
    <property type="match status" value="1"/>
</dbReference>
<dbReference type="Pfam" id="PF00093">
    <property type="entry name" value="VWC"/>
    <property type="match status" value="1"/>
</dbReference>
<dbReference type="PIRSF" id="PIRSF036495">
    <property type="entry name" value="IGFBP_rP_CNN"/>
    <property type="match status" value="1"/>
</dbReference>
<dbReference type="SMART" id="SM00041">
    <property type="entry name" value="CT"/>
    <property type="match status" value="1"/>
</dbReference>
<dbReference type="SMART" id="SM00121">
    <property type="entry name" value="IB"/>
    <property type="match status" value="1"/>
</dbReference>
<dbReference type="SMART" id="SM00209">
    <property type="entry name" value="TSP1"/>
    <property type="match status" value="1"/>
</dbReference>
<dbReference type="SMART" id="SM00214">
    <property type="entry name" value="VWC"/>
    <property type="match status" value="1"/>
</dbReference>
<dbReference type="SUPFAM" id="SSF57603">
    <property type="entry name" value="FnI-like domain"/>
    <property type="match status" value="1"/>
</dbReference>
<dbReference type="SUPFAM" id="SSF57184">
    <property type="entry name" value="Growth factor receptor domain"/>
    <property type="match status" value="1"/>
</dbReference>
<dbReference type="SUPFAM" id="SSF82895">
    <property type="entry name" value="TSP-1 type 1 repeat"/>
    <property type="match status" value="1"/>
</dbReference>
<dbReference type="PROSITE" id="PS01185">
    <property type="entry name" value="CTCK_1"/>
    <property type="match status" value="1"/>
</dbReference>
<dbReference type="PROSITE" id="PS01225">
    <property type="entry name" value="CTCK_2"/>
    <property type="match status" value="1"/>
</dbReference>
<dbReference type="PROSITE" id="PS00222">
    <property type="entry name" value="IGFBP_N_1"/>
    <property type="match status" value="1"/>
</dbReference>
<dbReference type="PROSITE" id="PS51323">
    <property type="entry name" value="IGFBP_N_2"/>
    <property type="match status" value="1"/>
</dbReference>
<dbReference type="PROSITE" id="PS50092">
    <property type="entry name" value="TSP1"/>
    <property type="match status" value="1"/>
</dbReference>
<dbReference type="PROSITE" id="PS01208">
    <property type="entry name" value="VWFC_1"/>
    <property type="match status" value="1"/>
</dbReference>
<dbReference type="PROSITE" id="PS50184">
    <property type="entry name" value="VWFC_2"/>
    <property type="match status" value="1"/>
</dbReference>
<organism>
    <name type="scientific">Pan troglodytes</name>
    <name type="common">Chimpanzee</name>
    <dbReference type="NCBI Taxonomy" id="9598"/>
    <lineage>
        <taxon>Eukaryota</taxon>
        <taxon>Metazoa</taxon>
        <taxon>Chordata</taxon>
        <taxon>Craniata</taxon>
        <taxon>Vertebrata</taxon>
        <taxon>Euteleostomi</taxon>
        <taxon>Mammalia</taxon>
        <taxon>Eutheria</taxon>
        <taxon>Euarchontoglires</taxon>
        <taxon>Primates</taxon>
        <taxon>Haplorrhini</taxon>
        <taxon>Catarrhini</taxon>
        <taxon>Hominidae</taxon>
        <taxon>Pan</taxon>
    </lineage>
</organism>
<gene>
    <name type="primary">CCN1</name>
    <name type="synonym">Cyr61</name>
</gene>
<proteinExistence type="evidence at transcript level"/>
<sequence length="381" mass="42013">MSSRIARALALVVTLLHLTRLALSTCPAACHCPLEAPKCAPGVGLVRDGCGCCKVCAKQLNEDCSKTQPCDHTKGLECNFGASSTALKGICRAQSEGRPCEYNSRIYQNGESFQPNCKHQCTCIDGAVGCIPLCPQELSLPNLGCPNPRLVKVSGQCCEEWVCDEDSIKDPMEDQDGLLGKELGFDASEVELTRNNELIAVGKGSSLKRLPVFGMEPRILYNPLQGQKCIVQTTSWSQCSKTCGTGISTRVTNDNPECRLVKETRICEVRPCGQPVYSSLKKGKKCSKTKKSPEPVRFTYAGCLSVKKYRPKYCGSCVDGRCCTPQLTRTVKMRFRCEDGETFSKNVMMIQSCKCNYNCPHANEAAFPFYRLFNDIHKFRD</sequence>
<evidence type="ECO:0000250" key="1"/>
<evidence type="ECO:0000250" key="2">
    <source>
        <dbReference type="UniProtKB" id="O00622"/>
    </source>
</evidence>
<evidence type="ECO:0000250" key="3">
    <source>
        <dbReference type="UniProtKB" id="P18406"/>
    </source>
</evidence>
<evidence type="ECO:0000255" key="4"/>
<evidence type="ECO:0000255" key="5">
    <source>
        <dbReference type="PROSITE-ProRule" id="PRU00039"/>
    </source>
</evidence>
<evidence type="ECO:0000255" key="6">
    <source>
        <dbReference type="PROSITE-ProRule" id="PRU00210"/>
    </source>
</evidence>
<evidence type="ECO:0000255" key="7">
    <source>
        <dbReference type="PROSITE-ProRule" id="PRU00220"/>
    </source>
</evidence>
<evidence type="ECO:0000255" key="8">
    <source>
        <dbReference type="PROSITE-ProRule" id="PRU00653"/>
    </source>
</evidence>
<evidence type="ECO:0000305" key="9"/>
<feature type="signal peptide" evidence="4">
    <location>
        <begin position="1"/>
        <end position="24"/>
    </location>
</feature>
<feature type="chain" id="PRO_0000297553" description="CCN family member 1">
    <location>
        <begin position="25"/>
        <end position="381"/>
    </location>
</feature>
<feature type="domain" description="IGFBP N-terminal" evidence="8">
    <location>
        <begin position="25"/>
        <end position="94"/>
    </location>
</feature>
<feature type="domain" description="VWFC" evidence="7">
    <location>
        <begin position="98"/>
        <end position="164"/>
    </location>
</feature>
<feature type="domain" description="TSP type-1" evidence="6">
    <location>
        <begin position="228"/>
        <end position="273"/>
    </location>
</feature>
<feature type="domain" description="CTCK" evidence="5">
    <location>
        <begin position="286"/>
        <end position="360"/>
    </location>
</feature>
<feature type="region of interest" description="Heparin-binding" evidence="3">
    <location>
        <begin position="279"/>
        <end position="315"/>
    </location>
</feature>
<feature type="modified residue" description="Phosphoserine" evidence="2">
    <location>
        <position position="188"/>
    </location>
</feature>
<feature type="disulfide bond" evidence="8">
    <location>
        <begin position="26"/>
        <end position="50"/>
    </location>
</feature>
<feature type="disulfide bond" evidence="8">
    <location>
        <begin position="30"/>
        <end position="52"/>
    </location>
</feature>
<feature type="disulfide bond" evidence="8">
    <location>
        <begin position="32"/>
        <end position="53"/>
    </location>
</feature>
<feature type="disulfide bond" evidence="8">
    <location>
        <begin position="39"/>
        <end position="56"/>
    </location>
</feature>
<feature type="disulfide bond" evidence="8">
    <location>
        <begin position="64"/>
        <end position="78"/>
    </location>
</feature>
<feature type="disulfide bond" evidence="8">
    <location>
        <begin position="70"/>
        <end position="91"/>
    </location>
</feature>
<feature type="disulfide bond" evidence="1">
    <location>
        <begin position="286"/>
        <end position="323"/>
    </location>
</feature>
<feature type="disulfide bond" evidence="1">
    <location>
        <begin position="303"/>
        <end position="337"/>
    </location>
</feature>
<feature type="disulfide bond" evidence="1">
    <location>
        <begin position="314"/>
        <end position="353"/>
    </location>
</feature>
<feature type="disulfide bond" evidence="1">
    <location>
        <begin position="317"/>
        <end position="355"/>
    </location>
</feature>
<feature type="disulfide bond" evidence="1">
    <location>
        <begin position="322"/>
        <end position="359"/>
    </location>
</feature>
<name>CCN1_PANTR</name>
<comment type="function">
    <text evidence="1">Promotes cell proliferation, chemotaxis, angiogenesis and cell adhesion. Appears to play a role in wound healing by up-regulating, in skin fibroblasts, the expression of a number of genes involved in angiogenesis, inflammation and matrix remodeling including VEGA-A, VEGA-C, MMP1, MMP3, TIMP1, uPA, PAI-1 and integrins alpha-3 and alpha-5 (By similarity). CCN1-mediated gene regulation is dependent on heparin-binding (By similarity). Down-regulates the expression of alpha-1 and alpha-2 subunits of collagen type-1 (By similarity). Promotes cell adhesion and adhesive signaling through integrin alpha-6/beta-1, cell migration through integrin alpha-1/beta-5 and cell proliferation through integrin alpha-v/beta-3 (By similarity).</text>
</comment>
<comment type="subunit">
    <text evidence="1">Interaction with integrins is heparin- and cell-type-dependent and promotes cell adhesion.</text>
</comment>
<comment type="subcellular location">
    <subcellularLocation>
        <location>Secreted</location>
    </subcellularLocation>
</comment>
<comment type="similarity">
    <text evidence="9">Belongs to the CCN family.</text>
</comment>